<accession>A1B8N8</accession>
<protein>
    <recommendedName>
        <fullName evidence="1">ATP synthase subunit alpha</fullName>
        <ecNumber evidence="1">7.1.2.2</ecNumber>
    </recommendedName>
    <alternativeName>
        <fullName evidence="1">ATP synthase F1 sector subunit alpha</fullName>
    </alternativeName>
    <alternativeName>
        <fullName evidence="1">F-ATPase subunit alpha</fullName>
    </alternativeName>
</protein>
<evidence type="ECO:0000255" key="1">
    <source>
        <dbReference type="HAMAP-Rule" id="MF_01346"/>
    </source>
</evidence>
<evidence type="ECO:0007829" key="2">
    <source>
        <dbReference type="PDB" id="5CDF"/>
    </source>
</evidence>
<dbReference type="EC" id="7.1.2.2" evidence="1"/>
<dbReference type="EMBL" id="CP000490">
    <property type="protein sequence ID" value="ABL71882.1"/>
    <property type="molecule type" value="Genomic_DNA"/>
</dbReference>
<dbReference type="RefSeq" id="WP_011750051.1">
    <property type="nucleotide sequence ID" value="NC_008687.1"/>
</dbReference>
<dbReference type="PDB" id="5CDF">
    <property type="method" value="X-ray"/>
    <property type="resolution" value="2.30 A"/>
    <property type="chains" value="A=1-511"/>
</dbReference>
<dbReference type="PDB" id="5DN6">
    <property type="method" value="X-ray"/>
    <property type="resolution" value="3.98 A"/>
    <property type="chains" value="A/B/C=1-511"/>
</dbReference>
<dbReference type="PDBsum" id="5CDF"/>
<dbReference type="PDBsum" id="5DN6"/>
<dbReference type="SMR" id="A1B8N8"/>
<dbReference type="STRING" id="318586.Pden_3816"/>
<dbReference type="TCDB" id="3.A.2.1.7">
    <property type="family name" value="the h+- or na+-translocating f-type, v-type and a-type atpase (f-atpase) superfamily"/>
</dbReference>
<dbReference type="EnsemblBacteria" id="ABL71882">
    <property type="protein sequence ID" value="ABL71882"/>
    <property type="gene ID" value="Pden_3816"/>
</dbReference>
<dbReference type="GeneID" id="93453478"/>
<dbReference type="KEGG" id="pde:Pden_3816"/>
<dbReference type="eggNOG" id="COG0056">
    <property type="taxonomic scope" value="Bacteria"/>
</dbReference>
<dbReference type="HOGENOM" id="CLU_010091_2_1_5"/>
<dbReference type="OrthoDB" id="9803053at2"/>
<dbReference type="EvolutionaryTrace" id="A1B8N8"/>
<dbReference type="Proteomes" id="UP000000361">
    <property type="component" value="Chromosome 2"/>
</dbReference>
<dbReference type="GO" id="GO:0005886">
    <property type="term" value="C:plasma membrane"/>
    <property type="evidence" value="ECO:0007669"/>
    <property type="project" value="UniProtKB-SubCell"/>
</dbReference>
<dbReference type="GO" id="GO:0045259">
    <property type="term" value="C:proton-transporting ATP synthase complex"/>
    <property type="evidence" value="ECO:0007669"/>
    <property type="project" value="UniProtKB-KW"/>
</dbReference>
<dbReference type="GO" id="GO:0043531">
    <property type="term" value="F:ADP binding"/>
    <property type="evidence" value="ECO:0007669"/>
    <property type="project" value="TreeGrafter"/>
</dbReference>
<dbReference type="GO" id="GO:0005524">
    <property type="term" value="F:ATP binding"/>
    <property type="evidence" value="ECO:0007669"/>
    <property type="project" value="UniProtKB-UniRule"/>
</dbReference>
<dbReference type="GO" id="GO:0046933">
    <property type="term" value="F:proton-transporting ATP synthase activity, rotational mechanism"/>
    <property type="evidence" value="ECO:0007669"/>
    <property type="project" value="UniProtKB-UniRule"/>
</dbReference>
<dbReference type="CDD" id="cd18113">
    <property type="entry name" value="ATP-synt_F1_alpha_C"/>
    <property type="match status" value="1"/>
</dbReference>
<dbReference type="CDD" id="cd18116">
    <property type="entry name" value="ATP-synt_F1_alpha_N"/>
    <property type="match status" value="1"/>
</dbReference>
<dbReference type="CDD" id="cd01132">
    <property type="entry name" value="F1-ATPase_alpha_CD"/>
    <property type="match status" value="1"/>
</dbReference>
<dbReference type="FunFam" id="1.20.150.20:FF:000001">
    <property type="entry name" value="ATP synthase subunit alpha"/>
    <property type="match status" value="1"/>
</dbReference>
<dbReference type="FunFam" id="2.40.30.20:FF:000001">
    <property type="entry name" value="ATP synthase subunit alpha"/>
    <property type="match status" value="1"/>
</dbReference>
<dbReference type="FunFam" id="3.40.50.300:FF:002432">
    <property type="entry name" value="ATP synthase subunit alpha, mitochondrial"/>
    <property type="match status" value="1"/>
</dbReference>
<dbReference type="Gene3D" id="2.40.30.20">
    <property type="match status" value="1"/>
</dbReference>
<dbReference type="Gene3D" id="1.20.150.20">
    <property type="entry name" value="ATP synthase alpha/beta chain, C-terminal domain"/>
    <property type="match status" value="1"/>
</dbReference>
<dbReference type="Gene3D" id="3.40.50.300">
    <property type="entry name" value="P-loop containing nucleotide triphosphate hydrolases"/>
    <property type="match status" value="1"/>
</dbReference>
<dbReference type="HAMAP" id="MF_01346">
    <property type="entry name" value="ATP_synth_alpha_bact"/>
    <property type="match status" value="1"/>
</dbReference>
<dbReference type="InterPro" id="IPR023366">
    <property type="entry name" value="ATP_synth_asu-like_sf"/>
</dbReference>
<dbReference type="InterPro" id="IPR000793">
    <property type="entry name" value="ATP_synth_asu_C"/>
</dbReference>
<dbReference type="InterPro" id="IPR038376">
    <property type="entry name" value="ATP_synth_asu_C_sf"/>
</dbReference>
<dbReference type="InterPro" id="IPR033732">
    <property type="entry name" value="ATP_synth_F1_a_nt-bd_dom"/>
</dbReference>
<dbReference type="InterPro" id="IPR005294">
    <property type="entry name" value="ATP_synth_F1_asu"/>
</dbReference>
<dbReference type="InterPro" id="IPR020003">
    <property type="entry name" value="ATPase_a/bsu_AS"/>
</dbReference>
<dbReference type="InterPro" id="IPR004100">
    <property type="entry name" value="ATPase_F1/V1/A1_a/bsu_N"/>
</dbReference>
<dbReference type="InterPro" id="IPR036121">
    <property type="entry name" value="ATPase_F1/V1/A1_a/bsu_N_sf"/>
</dbReference>
<dbReference type="InterPro" id="IPR000194">
    <property type="entry name" value="ATPase_F1/V1/A1_a/bsu_nucl-bd"/>
</dbReference>
<dbReference type="InterPro" id="IPR027417">
    <property type="entry name" value="P-loop_NTPase"/>
</dbReference>
<dbReference type="NCBIfam" id="TIGR00962">
    <property type="entry name" value="atpA"/>
    <property type="match status" value="1"/>
</dbReference>
<dbReference type="NCBIfam" id="NF009884">
    <property type="entry name" value="PRK13343.1"/>
    <property type="match status" value="1"/>
</dbReference>
<dbReference type="PANTHER" id="PTHR48082">
    <property type="entry name" value="ATP SYNTHASE SUBUNIT ALPHA, MITOCHONDRIAL"/>
    <property type="match status" value="1"/>
</dbReference>
<dbReference type="PANTHER" id="PTHR48082:SF2">
    <property type="entry name" value="ATP SYNTHASE SUBUNIT ALPHA, MITOCHONDRIAL"/>
    <property type="match status" value="1"/>
</dbReference>
<dbReference type="Pfam" id="PF00006">
    <property type="entry name" value="ATP-synt_ab"/>
    <property type="match status" value="1"/>
</dbReference>
<dbReference type="Pfam" id="PF00306">
    <property type="entry name" value="ATP-synt_ab_C"/>
    <property type="match status" value="1"/>
</dbReference>
<dbReference type="Pfam" id="PF02874">
    <property type="entry name" value="ATP-synt_ab_N"/>
    <property type="match status" value="1"/>
</dbReference>
<dbReference type="PIRSF" id="PIRSF039088">
    <property type="entry name" value="F_ATPase_subunit_alpha"/>
    <property type="match status" value="1"/>
</dbReference>
<dbReference type="SUPFAM" id="SSF47917">
    <property type="entry name" value="C-terminal domain of alpha and beta subunits of F1 ATP synthase"/>
    <property type="match status" value="1"/>
</dbReference>
<dbReference type="SUPFAM" id="SSF50615">
    <property type="entry name" value="N-terminal domain of alpha and beta subunits of F1 ATP synthase"/>
    <property type="match status" value="1"/>
</dbReference>
<dbReference type="SUPFAM" id="SSF52540">
    <property type="entry name" value="P-loop containing nucleoside triphosphate hydrolases"/>
    <property type="match status" value="1"/>
</dbReference>
<dbReference type="PROSITE" id="PS00152">
    <property type="entry name" value="ATPASE_ALPHA_BETA"/>
    <property type="match status" value="1"/>
</dbReference>
<name>ATPA_PARDP</name>
<reference key="1">
    <citation type="submission" date="2006-12" db="EMBL/GenBank/DDBJ databases">
        <title>Complete sequence of chromosome 2 of Paracoccus denitrificans PD1222.</title>
        <authorList>
            <person name="Copeland A."/>
            <person name="Lucas S."/>
            <person name="Lapidus A."/>
            <person name="Barry K."/>
            <person name="Detter J.C."/>
            <person name="Glavina del Rio T."/>
            <person name="Hammon N."/>
            <person name="Israni S."/>
            <person name="Dalin E."/>
            <person name="Tice H."/>
            <person name="Pitluck S."/>
            <person name="Munk A.C."/>
            <person name="Brettin T."/>
            <person name="Bruce D."/>
            <person name="Han C."/>
            <person name="Tapia R."/>
            <person name="Gilna P."/>
            <person name="Schmutz J."/>
            <person name="Larimer F."/>
            <person name="Land M."/>
            <person name="Hauser L."/>
            <person name="Kyrpides N."/>
            <person name="Lykidis A."/>
            <person name="Spiro S."/>
            <person name="Richardson D.J."/>
            <person name="Moir J.W.B."/>
            <person name="Ferguson S.J."/>
            <person name="van Spanning R.J.M."/>
            <person name="Richardson P."/>
        </authorList>
    </citation>
    <scope>NUCLEOTIDE SEQUENCE [LARGE SCALE GENOMIC DNA]</scope>
    <source>
        <strain>Pd 1222</strain>
    </source>
</reference>
<gene>
    <name evidence="1" type="primary">atpA</name>
    <name type="ordered locus">Pden_3816</name>
</gene>
<comment type="function">
    <text evidence="1">Produces ATP from ADP in the presence of a proton gradient across the membrane. The alpha chain is a regulatory subunit.</text>
</comment>
<comment type="catalytic activity">
    <reaction evidence="1">
        <text>ATP + H2O + 4 H(+)(in) = ADP + phosphate + 5 H(+)(out)</text>
        <dbReference type="Rhea" id="RHEA:57720"/>
        <dbReference type="ChEBI" id="CHEBI:15377"/>
        <dbReference type="ChEBI" id="CHEBI:15378"/>
        <dbReference type="ChEBI" id="CHEBI:30616"/>
        <dbReference type="ChEBI" id="CHEBI:43474"/>
        <dbReference type="ChEBI" id="CHEBI:456216"/>
        <dbReference type="EC" id="7.1.2.2"/>
    </reaction>
</comment>
<comment type="subunit">
    <text evidence="1">F-type ATPases have 2 components, CF(1) - the catalytic core - and CF(0) - the membrane proton channel. CF(1) has five subunits: alpha(3), beta(3), gamma(1), delta(1), epsilon(1). CF(0) has three main subunits: a(1), b(2) and c(9-12). The alpha and beta chains form an alternating ring which encloses part of the gamma chain. CF(1) is attached to CF(0) by a central stalk formed by the gamma and epsilon chains, while a peripheral stalk is formed by the delta and b chains.</text>
</comment>
<comment type="subcellular location">
    <subcellularLocation>
        <location evidence="1">Cell inner membrane</location>
        <topology evidence="1">Peripheral membrane protein</topology>
    </subcellularLocation>
</comment>
<comment type="similarity">
    <text evidence="1">Belongs to the ATPase alpha/beta chains family.</text>
</comment>
<organism>
    <name type="scientific">Paracoccus denitrificans (strain Pd 1222)</name>
    <dbReference type="NCBI Taxonomy" id="318586"/>
    <lineage>
        <taxon>Bacteria</taxon>
        <taxon>Pseudomonadati</taxon>
        <taxon>Pseudomonadota</taxon>
        <taxon>Alphaproteobacteria</taxon>
        <taxon>Rhodobacterales</taxon>
        <taxon>Paracoccaceae</taxon>
        <taxon>Paracoccus</taxon>
    </lineage>
</organism>
<proteinExistence type="evidence at protein level"/>
<feature type="chain" id="PRO_0000302681" description="ATP synthase subunit alpha">
    <location>
        <begin position="1"/>
        <end position="511"/>
    </location>
</feature>
<feature type="binding site" evidence="1">
    <location>
        <begin position="169"/>
        <end position="176"/>
    </location>
    <ligand>
        <name>ATP</name>
        <dbReference type="ChEBI" id="CHEBI:30616"/>
    </ligand>
</feature>
<feature type="site" description="Required for activity" evidence="1">
    <location>
        <position position="371"/>
    </location>
</feature>
<feature type="strand" evidence="2">
    <location>
        <begin position="26"/>
        <end position="35"/>
    </location>
</feature>
<feature type="strand" evidence="2">
    <location>
        <begin position="38"/>
        <end position="43"/>
    </location>
</feature>
<feature type="strand" evidence="2">
    <location>
        <begin position="51"/>
        <end position="54"/>
    </location>
</feature>
<feature type="strand" evidence="2">
    <location>
        <begin position="60"/>
        <end position="66"/>
    </location>
</feature>
<feature type="strand" evidence="2">
    <location>
        <begin position="71"/>
        <end position="77"/>
    </location>
</feature>
<feature type="strand" evidence="2">
    <location>
        <begin position="79"/>
        <end position="81"/>
    </location>
</feature>
<feature type="strand" evidence="2">
    <location>
        <begin position="87"/>
        <end position="94"/>
    </location>
</feature>
<feature type="strand" evidence="2">
    <location>
        <begin position="96"/>
        <end position="98"/>
    </location>
</feature>
<feature type="helix" evidence="2">
    <location>
        <begin position="101"/>
        <end position="103"/>
    </location>
</feature>
<feature type="strand" evidence="2">
    <location>
        <begin position="116"/>
        <end position="118"/>
    </location>
</feature>
<feature type="strand" evidence="2">
    <location>
        <begin position="126"/>
        <end position="130"/>
    </location>
</feature>
<feature type="helix" evidence="2">
    <location>
        <begin position="151"/>
        <end position="156"/>
    </location>
</feature>
<feature type="strand" evidence="2">
    <location>
        <begin position="166"/>
        <end position="170"/>
    </location>
</feature>
<feature type="helix" evidence="2">
    <location>
        <begin position="175"/>
        <end position="185"/>
    </location>
</feature>
<feature type="helix" evidence="2">
    <location>
        <begin position="186"/>
        <end position="188"/>
    </location>
</feature>
<feature type="turn" evidence="2">
    <location>
        <begin position="189"/>
        <end position="191"/>
    </location>
</feature>
<feature type="strand" evidence="2">
    <location>
        <begin position="200"/>
        <end position="208"/>
    </location>
</feature>
<feature type="helix" evidence="2">
    <location>
        <begin position="211"/>
        <end position="224"/>
    </location>
</feature>
<feature type="helix" evidence="2">
    <location>
        <begin position="226"/>
        <end position="229"/>
    </location>
</feature>
<feature type="strand" evidence="2">
    <location>
        <begin position="230"/>
        <end position="235"/>
    </location>
</feature>
<feature type="helix" evidence="2">
    <location>
        <begin position="241"/>
        <end position="260"/>
    </location>
</feature>
<feature type="strand" evidence="2">
    <location>
        <begin position="264"/>
        <end position="270"/>
    </location>
</feature>
<feature type="helix" evidence="2">
    <location>
        <begin position="272"/>
        <end position="285"/>
    </location>
</feature>
<feature type="helix" evidence="2">
    <location>
        <begin position="292"/>
        <end position="294"/>
    </location>
</feature>
<feature type="helix" evidence="2">
    <location>
        <begin position="299"/>
        <end position="308"/>
    </location>
</feature>
<feature type="strand" evidence="2">
    <location>
        <begin position="311"/>
        <end position="313"/>
    </location>
</feature>
<feature type="helix" evidence="2">
    <location>
        <begin position="315"/>
        <end position="317"/>
    </location>
</feature>
<feature type="strand" evidence="2">
    <location>
        <begin position="321"/>
        <end position="329"/>
    </location>
</feature>
<feature type="helix" evidence="2">
    <location>
        <begin position="338"/>
        <end position="344"/>
    </location>
</feature>
<feature type="strand" evidence="2">
    <location>
        <begin position="347"/>
        <end position="353"/>
    </location>
</feature>
<feature type="helix" evidence="2">
    <location>
        <begin position="355"/>
        <end position="359"/>
    </location>
</feature>
<feature type="turn" evidence="2">
    <location>
        <begin position="368"/>
        <end position="370"/>
    </location>
</feature>
<feature type="strand" evidence="2">
    <location>
        <begin position="372"/>
        <end position="375"/>
    </location>
</feature>
<feature type="helix" evidence="2">
    <location>
        <begin position="376"/>
        <end position="379"/>
    </location>
</feature>
<feature type="helix" evidence="2">
    <location>
        <begin position="382"/>
        <end position="388"/>
    </location>
</feature>
<feature type="helix" evidence="2">
    <location>
        <begin position="391"/>
        <end position="405"/>
    </location>
</feature>
<feature type="helix" evidence="2">
    <location>
        <begin position="413"/>
        <end position="429"/>
    </location>
</feature>
<feature type="helix" evidence="2">
    <location>
        <begin position="439"/>
        <end position="450"/>
    </location>
</feature>
<feature type="turn" evidence="2">
    <location>
        <begin position="451"/>
        <end position="456"/>
    </location>
</feature>
<feature type="helix" evidence="2">
    <location>
        <begin position="459"/>
        <end position="461"/>
    </location>
</feature>
<feature type="helix" evidence="2">
    <location>
        <begin position="462"/>
        <end position="476"/>
    </location>
</feature>
<feature type="helix" evidence="2">
    <location>
        <begin position="478"/>
        <end position="486"/>
    </location>
</feature>
<feature type="helix" evidence="2">
    <location>
        <begin position="494"/>
        <end position="510"/>
    </location>
</feature>
<sequence length="511" mass="55039">MGIQAAEISAILKDQIKNFGQDAEVAEVGQVLSVGDGIARVYGLDKVQAGEMVEFPGGIRGMVLNLETDNVGVVIFGDDRDIKEGDTVKRTGAIVEVPAGKELLGRVVDALGNPIDGKGPLNASERRIADVKAPGIMPRKSVHEPMATGLKSVDAMIPVGRGQRELIIGDRQTGKTAIALDTILNQANYNGREADGMKTLHCIYVAVGQKRSTVAQLVKKLEETGAMAYTTVVAATASDPAPMQYLAPYSATAMGEYFRDNGMDALIIYDDLSKQAVAYRQMSLLLRRPPGREAYPGDVFYLHSRLLERSAKLNEANGAGSLTALPIIETQAGDVSAYIPTNVISITDGQIFLETELFFQGIRPAVNTGLSVSRVGSAAQTKAMKSVAGPVKLELAQYREMAAFAQFGSDLDAATQKLLNRGARLTELMKQPQYSPLTNAEIVIVIYAGTKGYLDGIPVRDVTKWEHGLLQYLRNQKADLLEDMTKNDRKVAGELEDAIKAALDGYAKTYA</sequence>
<keyword id="KW-0002">3D-structure</keyword>
<keyword id="KW-0066">ATP synthesis</keyword>
<keyword id="KW-0067">ATP-binding</keyword>
<keyword id="KW-0997">Cell inner membrane</keyword>
<keyword id="KW-1003">Cell membrane</keyword>
<keyword id="KW-0139">CF(1)</keyword>
<keyword id="KW-0375">Hydrogen ion transport</keyword>
<keyword id="KW-0406">Ion transport</keyword>
<keyword id="KW-0472">Membrane</keyword>
<keyword id="KW-0547">Nucleotide-binding</keyword>
<keyword id="KW-1185">Reference proteome</keyword>
<keyword id="KW-1278">Translocase</keyword>
<keyword id="KW-0813">Transport</keyword>